<evidence type="ECO:0000255" key="1">
    <source>
        <dbReference type="HAMAP-Rule" id="MF_00297"/>
    </source>
</evidence>
<feature type="chain" id="PRO_1000119466" description="NAD-capped RNA hydrolase NudC">
    <location>
        <begin position="1"/>
        <end position="278"/>
    </location>
</feature>
<feature type="domain" description="Nudix hydrolase" evidence="1">
    <location>
        <begin position="141"/>
        <end position="265"/>
    </location>
</feature>
<feature type="short sequence motif" description="Nudix box" evidence="1">
    <location>
        <begin position="175"/>
        <end position="196"/>
    </location>
</feature>
<feature type="binding site" evidence="1">
    <location>
        <position position="84"/>
    </location>
    <ligand>
        <name>substrate</name>
    </ligand>
</feature>
<feature type="binding site" evidence="1">
    <location>
        <position position="114"/>
    </location>
    <ligand>
        <name>Zn(2+)</name>
        <dbReference type="ChEBI" id="CHEBI:29105"/>
    </ligand>
</feature>
<feature type="binding site" evidence="1">
    <location>
        <position position="117"/>
    </location>
    <ligand>
        <name>Zn(2+)</name>
        <dbReference type="ChEBI" id="CHEBI:29105"/>
    </ligand>
</feature>
<feature type="binding site" evidence="1">
    <location>
        <position position="127"/>
    </location>
    <ligand>
        <name>substrate</name>
    </ligand>
</feature>
<feature type="binding site" evidence="1">
    <location>
        <position position="132"/>
    </location>
    <ligand>
        <name>Zn(2+)</name>
        <dbReference type="ChEBI" id="CHEBI:29105"/>
    </ligand>
</feature>
<feature type="binding site" evidence="1">
    <location>
        <position position="135"/>
    </location>
    <ligand>
        <name>Zn(2+)</name>
        <dbReference type="ChEBI" id="CHEBI:29105"/>
    </ligand>
</feature>
<feature type="binding site" evidence="1">
    <location>
        <position position="140"/>
    </location>
    <ligand>
        <name>substrate</name>
    </ligand>
</feature>
<feature type="binding site" evidence="1">
    <location>
        <position position="174"/>
    </location>
    <ligand>
        <name>a divalent metal cation</name>
        <dbReference type="ChEBI" id="CHEBI:60240"/>
        <label>1</label>
    </ligand>
</feature>
<feature type="binding site" evidence="1">
    <location>
        <position position="190"/>
    </location>
    <ligand>
        <name>a divalent metal cation</name>
        <dbReference type="ChEBI" id="CHEBI:60240"/>
        <label>2</label>
    </ligand>
</feature>
<feature type="binding site" evidence="1">
    <location>
        <position position="190"/>
    </location>
    <ligand>
        <name>a divalent metal cation</name>
        <dbReference type="ChEBI" id="CHEBI:60240"/>
        <label>3</label>
    </ligand>
</feature>
<feature type="binding site" evidence="1">
    <location>
        <position position="194"/>
    </location>
    <ligand>
        <name>a divalent metal cation</name>
        <dbReference type="ChEBI" id="CHEBI:60240"/>
        <label>1</label>
    </ligand>
</feature>
<feature type="binding site" evidence="1">
    <location>
        <position position="194"/>
    </location>
    <ligand>
        <name>a divalent metal cation</name>
        <dbReference type="ChEBI" id="CHEBI:60240"/>
        <label>3</label>
    </ligand>
</feature>
<feature type="binding site" evidence="1">
    <location>
        <begin position="208"/>
        <end position="215"/>
    </location>
    <ligand>
        <name>substrate</name>
    </ligand>
</feature>
<feature type="binding site" evidence="1">
    <location>
        <position position="235"/>
    </location>
    <ligand>
        <name>a divalent metal cation</name>
        <dbReference type="ChEBI" id="CHEBI:60240"/>
        <label>1</label>
    </ligand>
</feature>
<feature type="binding site" evidence="1">
    <location>
        <position position="235"/>
    </location>
    <ligand>
        <name>a divalent metal cation</name>
        <dbReference type="ChEBI" id="CHEBI:60240"/>
        <label>3</label>
    </ligand>
</feature>
<feature type="binding site" evidence="1">
    <location>
        <position position="257"/>
    </location>
    <ligand>
        <name>substrate</name>
    </ligand>
</feature>
<reference key="1">
    <citation type="journal article" date="2009" name="Genome Res.">
        <title>Newly introduced genomic prophage islands are critical determinants of in vivo competitiveness in the Liverpool epidemic strain of Pseudomonas aeruginosa.</title>
        <authorList>
            <person name="Winstanley C."/>
            <person name="Langille M.G.I."/>
            <person name="Fothergill J.L."/>
            <person name="Kukavica-Ibrulj I."/>
            <person name="Paradis-Bleau C."/>
            <person name="Sanschagrin F."/>
            <person name="Thomson N.R."/>
            <person name="Winsor G.L."/>
            <person name="Quail M.A."/>
            <person name="Lennard N."/>
            <person name="Bignell A."/>
            <person name="Clarke L."/>
            <person name="Seeger K."/>
            <person name="Saunders D."/>
            <person name="Harris D."/>
            <person name="Parkhill J."/>
            <person name="Hancock R.E.W."/>
            <person name="Brinkman F.S.L."/>
            <person name="Levesque R.C."/>
        </authorList>
    </citation>
    <scope>NUCLEOTIDE SEQUENCE [LARGE SCALE GENOMIC DNA]</scope>
    <source>
        <strain>LESB58</strain>
    </source>
</reference>
<organism>
    <name type="scientific">Pseudomonas aeruginosa (strain LESB58)</name>
    <dbReference type="NCBI Taxonomy" id="557722"/>
    <lineage>
        <taxon>Bacteria</taxon>
        <taxon>Pseudomonadati</taxon>
        <taxon>Pseudomonadota</taxon>
        <taxon>Gammaproteobacteria</taxon>
        <taxon>Pseudomonadales</taxon>
        <taxon>Pseudomonadaceae</taxon>
        <taxon>Pseudomonas</taxon>
    </lineage>
</organism>
<protein>
    <recommendedName>
        <fullName evidence="1">NAD-capped RNA hydrolase NudC</fullName>
        <shortName evidence="1">DeNADding enzyme NudC</shortName>
        <ecNumber evidence="1">3.6.1.-</ecNumber>
    </recommendedName>
    <alternativeName>
        <fullName evidence="1">NADH pyrophosphatase</fullName>
        <ecNumber evidence="1">3.6.1.22</ecNumber>
    </alternativeName>
</protein>
<comment type="function">
    <text evidence="1">mRNA decapping enzyme that specifically removes the nicotinamide adenine dinucleotide (NAD) cap from a subset of mRNAs by hydrolyzing the diphosphate linkage to produce nicotinamide mononucleotide (NMN) and 5' monophosphate mRNA. The NAD-cap is present at the 5'-end of some mRNAs and stabilizes RNA against 5'-processing. Has preference for mRNAs with a 5'-end purine. Catalyzes the hydrolysis of a broad range of dinucleotide pyrophosphates.</text>
</comment>
<comment type="catalytic activity">
    <reaction evidence="1">
        <text>a 5'-end NAD(+)-phospho-ribonucleoside in mRNA + H2O = a 5'-end phospho-adenosine-phospho-ribonucleoside in mRNA + beta-nicotinamide D-ribonucleotide + 2 H(+)</text>
        <dbReference type="Rhea" id="RHEA:60876"/>
        <dbReference type="Rhea" id="RHEA-COMP:15698"/>
        <dbReference type="Rhea" id="RHEA-COMP:15719"/>
        <dbReference type="ChEBI" id="CHEBI:14649"/>
        <dbReference type="ChEBI" id="CHEBI:15377"/>
        <dbReference type="ChEBI" id="CHEBI:15378"/>
        <dbReference type="ChEBI" id="CHEBI:144029"/>
        <dbReference type="ChEBI" id="CHEBI:144051"/>
    </reaction>
    <physiologicalReaction direction="left-to-right" evidence="1">
        <dbReference type="Rhea" id="RHEA:60877"/>
    </physiologicalReaction>
</comment>
<comment type="catalytic activity">
    <reaction evidence="1">
        <text>NAD(+) + H2O = beta-nicotinamide D-ribonucleotide + AMP + 2 H(+)</text>
        <dbReference type="Rhea" id="RHEA:11800"/>
        <dbReference type="ChEBI" id="CHEBI:14649"/>
        <dbReference type="ChEBI" id="CHEBI:15377"/>
        <dbReference type="ChEBI" id="CHEBI:15378"/>
        <dbReference type="ChEBI" id="CHEBI:57540"/>
        <dbReference type="ChEBI" id="CHEBI:456215"/>
        <dbReference type="EC" id="3.6.1.22"/>
    </reaction>
</comment>
<comment type="catalytic activity">
    <reaction evidence="1">
        <text>NADH + H2O = reduced beta-nicotinamide D-ribonucleotide + AMP + 2 H(+)</text>
        <dbReference type="Rhea" id="RHEA:48868"/>
        <dbReference type="ChEBI" id="CHEBI:15377"/>
        <dbReference type="ChEBI" id="CHEBI:15378"/>
        <dbReference type="ChEBI" id="CHEBI:57945"/>
        <dbReference type="ChEBI" id="CHEBI:90832"/>
        <dbReference type="ChEBI" id="CHEBI:456215"/>
        <dbReference type="EC" id="3.6.1.22"/>
    </reaction>
</comment>
<comment type="cofactor">
    <cofactor evidence="1">
        <name>Mg(2+)</name>
        <dbReference type="ChEBI" id="CHEBI:18420"/>
    </cofactor>
    <cofactor evidence="1">
        <name>Mn(2+)</name>
        <dbReference type="ChEBI" id="CHEBI:29035"/>
    </cofactor>
    <text evidence="1">Divalent metal cations. Mg(2+) or Mn(2+).</text>
</comment>
<comment type="cofactor">
    <cofactor evidence="1">
        <name>Zn(2+)</name>
        <dbReference type="ChEBI" id="CHEBI:29105"/>
    </cofactor>
    <text evidence="1">Binds 1 zinc ion per subunit.</text>
</comment>
<comment type="subunit">
    <text evidence="1">Homodimer.</text>
</comment>
<comment type="similarity">
    <text evidence="1">Belongs to the Nudix hydrolase family. NudC subfamily.</text>
</comment>
<dbReference type="EC" id="3.6.1.-" evidence="1"/>
<dbReference type="EC" id="3.6.1.22" evidence="1"/>
<dbReference type="EMBL" id="FM209186">
    <property type="protein sequence ID" value="CAW28231.1"/>
    <property type="molecule type" value="Genomic_DNA"/>
</dbReference>
<dbReference type="RefSeq" id="WP_012614278.1">
    <property type="nucleotide sequence ID" value="NC_011770.1"/>
</dbReference>
<dbReference type="SMR" id="B7VB54"/>
<dbReference type="KEGG" id="pag:PLES_35041"/>
<dbReference type="HOGENOM" id="CLU_037162_0_1_6"/>
<dbReference type="GO" id="GO:0005829">
    <property type="term" value="C:cytosol"/>
    <property type="evidence" value="ECO:0007669"/>
    <property type="project" value="TreeGrafter"/>
</dbReference>
<dbReference type="GO" id="GO:0000287">
    <property type="term" value="F:magnesium ion binding"/>
    <property type="evidence" value="ECO:0007669"/>
    <property type="project" value="UniProtKB-UniRule"/>
</dbReference>
<dbReference type="GO" id="GO:0030145">
    <property type="term" value="F:manganese ion binding"/>
    <property type="evidence" value="ECO:0007669"/>
    <property type="project" value="UniProtKB-UniRule"/>
</dbReference>
<dbReference type="GO" id="GO:0000210">
    <property type="term" value="F:NAD+ diphosphatase activity"/>
    <property type="evidence" value="ECO:0007669"/>
    <property type="project" value="UniProtKB-UniRule"/>
</dbReference>
<dbReference type="GO" id="GO:0035529">
    <property type="term" value="F:NADH pyrophosphatase activity"/>
    <property type="evidence" value="ECO:0007669"/>
    <property type="project" value="TreeGrafter"/>
</dbReference>
<dbReference type="GO" id="GO:0110153">
    <property type="term" value="F:RNA NAD-cap (NMN-forming) hydrolase activity"/>
    <property type="evidence" value="ECO:0007669"/>
    <property type="project" value="RHEA"/>
</dbReference>
<dbReference type="GO" id="GO:0008270">
    <property type="term" value="F:zinc ion binding"/>
    <property type="evidence" value="ECO:0007669"/>
    <property type="project" value="UniProtKB-UniRule"/>
</dbReference>
<dbReference type="GO" id="GO:0019677">
    <property type="term" value="P:NAD catabolic process"/>
    <property type="evidence" value="ECO:0007669"/>
    <property type="project" value="TreeGrafter"/>
</dbReference>
<dbReference type="GO" id="GO:0006734">
    <property type="term" value="P:NADH metabolic process"/>
    <property type="evidence" value="ECO:0007669"/>
    <property type="project" value="TreeGrafter"/>
</dbReference>
<dbReference type="GO" id="GO:0006742">
    <property type="term" value="P:NADP catabolic process"/>
    <property type="evidence" value="ECO:0007669"/>
    <property type="project" value="TreeGrafter"/>
</dbReference>
<dbReference type="CDD" id="cd03429">
    <property type="entry name" value="NUDIX_NADH_pyrophosphatase_Nudt13"/>
    <property type="match status" value="1"/>
</dbReference>
<dbReference type="FunFam" id="3.90.79.10:FF:000004">
    <property type="entry name" value="NADH pyrophosphatase"/>
    <property type="match status" value="1"/>
</dbReference>
<dbReference type="FunFam" id="3.90.79.20:FF:000004">
    <property type="entry name" value="NADH pyrophosphatase"/>
    <property type="match status" value="1"/>
</dbReference>
<dbReference type="Gene3D" id="3.90.79.20">
    <property type="match status" value="1"/>
</dbReference>
<dbReference type="Gene3D" id="3.90.79.10">
    <property type="entry name" value="Nucleoside Triphosphate Pyrophosphohydrolase"/>
    <property type="match status" value="1"/>
</dbReference>
<dbReference type="HAMAP" id="MF_00297">
    <property type="entry name" value="Nudix_NudC"/>
    <property type="match status" value="1"/>
</dbReference>
<dbReference type="InterPro" id="IPR050241">
    <property type="entry name" value="NAD-cap_RNA_hydrolase_NudC"/>
</dbReference>
<dbReference type="InterPro" id="IPR015375">
    <property type="entry name" value="NADH_PPase-like_N"/>
</dbReference>
<dbReference type="InterPro" id="IPR049734">
    <property type="entry name" value="NudC-like_C"/>
</dbReference>
<dbReference type="InterPro" id="IPR015797">
    <property type="entry name" value="NUDIX_hydrolase-like_dom_sf"/>
</dbReference>
<dbReference type="InterPro" id="IPR020084">
    <property type="entry name" value="NUDIX_hydrolase_CS"/>
</dbReference>
<dbReference type="InterPro" id="IPR000086">
    <property type="entry name" value="NUDIX_hydrolase_dom"/>
</dbReference>
<dbReference type="InterPro" id="IPR022925">
    <property type="entry name" value="RNA_Hydrolase_NudC"/>
</dbReference>
<dbReference type="InterPro" id="IPR015376">
    <property type="entry name" value="Znr_NADH_PPase"/>
</dbReference>
<dbReference type="NCBIfam" id="NF001299">
    <property type="entry name" value="PRK00241.1"/>
    <property type="match status" value="1"/>
</dbReference>
<dbReference type="PANTHER" id="PTHR42904:SF6">
    <property type="entry name" value="NAD-CAPPED RNA HYDROLASE NUDT12"/>
    <property type="match status" value="1"/>
</dbReference>
<dbReference type="PANTHER" id="PTHR42904">
    <property type="entry name" value="NUDIX HYDROLASE, NUDC SUBFAMILY"/>
    <property type="match status" value="1"/>
</dbReference>
<dbReference type="Pfam" id="PF00293">
    <property type="entry name" value="NUDIX"/>
    <property type="match status" value="1"/>
</dbReference>
<dbReference type="Pfam" id="PF09296">
    <property type="entry name" value="NUDIX-like"/>
    <property type="match status" value="1"/>
</dbReference>
<dbReference type="Pfam" id="PF09297">
    <property type="entry name" value="Zn_ribbon_NUD"/>
    <property type="match status" value="1"/>
</dbReference>
<dbReference type="SUPFAM" id="SSF55811">
    <property type="entry name" value="Nudix"/>
    <property type="match status" value="2"/>
</dbReference>
<dbReference type="PROSITE" id="PS51462">
    <property type="entry name" value="NUDIX"/>
    <property type="match status" value="1"/>
</dbReference>
<dbReference type="PROSITE" id="PS00893">
    <property type="entry name" value="NUDIX_BOX"/>
    <property type="match status" value="1"/>
</dbReference>
<proteinExistence type="inferred from homology"/>
<name>NUDC_PSEA8</name>
<accession>B7VB54</accession>
<keyword id="KW-0378">Hydrolase</keyword>
<keyword id="KW-0460">Magnesium</keyword>
<keyword id="KW-0464">Manganese</keyword>
<keyword id="KW-0479">Metal-binding</keyword>
<keyword id="KW-0520">NAD</keyword>
<keyword id="KW-0862">Zinc</keyword>
<gene>
    <name evidence="1" type="primary">nudC</name>
    <name type="ordered locus">PLES_35041</name>
</gene>
<sequence length="278" mass="31384">MVGEFRWQAGRPATAQVGGWVLAHCQQRFLQDDNGLLFPREWLKRQELPLLAEHGVGHWQGEPVYVLELDEPIELPGMAWAPLRQFMLHGDFDQFCMLGYASQIGIWARHNRFCGNCGTRMQAQDHERVMQCPQCGLHQYPRLSPSMIVLVTRGDEVLLARSPRFVPGVYSTLAGFVEAGESVEQCVVREVREEVGVEVANLEYIGSQNWPFPHSLMLGFHAEYVSGEIVPQEDEIEDAQWFSLDALPPLPAQRSIARHLIDLYLARRSGAAEPVLPG</sequence>